<gene>
    <name evidence="6" type="primary">Abhd4</name>
</gene>
<sequence length="342" mass="38861">MADDLEQQPQGWLSSWLPTWRPTSMSQLKNVEARILQCLQNKFLARYVSLPNQNKIWTVTVSPEQKDRTPLVMVHGFGGGVGLWILNMDSLSARRTLHTFDLLGFGRSSRPTFPRDPEGAEDEFVASIETWRETMGIPTMILLGHSLGGFLATSYSIKYPERVKHLILVDPWGFPLRPTDPSEIRAPPTWVKAVASVLGRSNPLAVLRVAGPWGPGLVQRFRPDFKRKFADFFEDDTISEYIYHCNAQNPSGETAFKAMMESFGWARRPMLERIHLIRKDVPITMIYGANTWIDTSTGKKVKMQRPDSYVRDMEIEGASHHVYADQPHIFNAVVEEICNSVD</sequence>
<organism>
    <name type="scientific">Mus musculus</name>
    <name type="common">Mouse</name>
    <dbReference type="NCBI Taxonomy" id="10090"/>
    <lineage>
        <taxon>Eukaryota</taxon>
        <taxon>Metazoa</taxon>
        <taxon>Chordata</taxon>
        <taxon>Craniata</taxon>
        <taxon>Vertebrata</taxon>
        <taxon>Euteleostomi</taxon>
        <taxon>Mammalia</taxon>
        <taxon>Eutheria</taxon>
        <taxon>Euarchontoglires</taxon>
        <taxon>Glires</taxon>
        <taxon>Rodentia</taxon>
        <taxon>Myomorpha</taxon>
        <taxon>Muroidea</taxon>
        <taxon>Muridae</taxon>
        <taxon>Murinae</taxon>
        <taxon>Mus</taxon>
        <taxon>Mus</taxon>
    </lineage>
</organism>
<dbReference type="EC" id="3.1.1.-"/>
<dbReference type="EMBL" id="AK049366">
    <property type="protein sequence ID" value="BAC33711.1"/>
    <property type="molecule type" value="mRNA"/>
</dbReference>
<dbReference type="EMBL" id="BC017532">
    <property type="protein sequence ID" value="AAH17532.1"/>
    <property type="molecule type" value="mRNA"/>
</dbReference>
<dbReference type="CCDS" id="CCDS56954.1"/>
<dbReference type="RefSeq" id="NP_001192110.1">
    <property type="nucleotide sequence ID" value="NM_001205181.1"/>
</dbReference>
<dbReference type="RefSeq" id="NP_598837.3">
    <property type="nucleotide sequence ID" value="NM_134076.3"/>
</dbReference>
<dbReference type="SMR" id="Q8VD66"/>
<dbReference type="BioGRID" id="222867">
    <property type="interactions" value="3"/>
</dbReference>
<dbReference type="FunCoup" id="Q8VD66">
    <property type="interactions" value="567"/>
</dbReference>
<dbReference type="STRING" id="10090.ENSMUSP00000044134"/>
<dbReference type="SwissLipids" id="SLP:000001119"/>
<dbReference type="ESTHER" id="mouse-abhd4">
    <property type="family name" value="CGI-58_ABHD5_ABHD4"/>
</dbReference>
<dbReference type="MEROPS" id="S33.013"/>
<dbReference type="iPTMnet" id="Q8VD66"/>
<dbReference type="PhosphoSitePlus" id="Q8VD66"/>
<dbReference type="PaxDb" id="10090-ENSMUSP00000044134"/>
<dbReference type="ProteomicsDB" id="285906"/>
<dbReference type="Pumba" id="Q8VD66"/>
<dbReference type="Antibodypedia" id="4">
    <property type="antibodies" value="222 antibodies from 30 providers"/>
</dbReference>
<dbReference type="DNASU" id="105501"/>
<dbReference type="Ensembl" id="ENSMUST00000041197.13">
    <property type="protein sequence ID" value="ENSMUSP00000044134.9"/>
    <property type="gene ID" value="ENSMUSG00000040997.15"/>
</dbReference>
<dbReference type="GeneID" id="105501"/>
<dbReference type="KEGG" id="mmu:105501"/>
<dbReference type="UCSC" id="uc007tvo.2">
    <property type="organism name" value="mouse"/>
</dbReference>
<dbReference type="AGR" id="MGI:1915938"/>
<dbReference type="CTD" id="63874"/>
<dbReference type="MGI" id="MGI:1915938">
    <property type="gene designation" value="Abhd4"/>
</dbReference>
<dbReference type="VEuPathDB" id="HostDB:ENSMUSG00000040997"/>
<dbReference type="eggNOG" id="KOG4409">
    <property type="taxonomic scope" value="Eukaryota"/>
</dbReference>
<dbReference type="GeneTree" id="ENSGT00390000016277"/>
<dbReference type="InParanoid" id="Q8VD66"/>
<dbReference type="OMA" id="AFHSMMQ"/>
<dbReference type="OrthoDB" id="7457040at2759"/>
<dbReference type="PhylomeDB" id="Q8VD66"/>
<dbReference type="Reactome" id="R-MMU-1482839">
    <property type="pathway name" value="Acyl chain remodelling of PE"/>
</dbReference>
<dbReference type="BioGRID-ORCS" id="105501">
    <property type="hits" value="2 hits in 81 CRISPR screens"/>
</dbReference>
<dbReference type="ChiTaRS" id="Abhd4">
    <property type="organism name" value="mouse"/>
</dbReference>
<dbReference type="PRO" id="PR:Q8VD66"/>
<dbReference type="Proteomes" id="UP000000589">
    <property type="component" value="Chromosome 14"/>
</dbReference>
<dbReference type="RNAct" id="Q8VD66">
    <property type="molecule type" value="protein"/>
</dbReference>
<dbReference type="Bgee" id="ENSMUSG00000040997">
    <property type="expression patterns" value="Expressed in adrenal gland and 260 other cell types or tissues"/>
</dbReference>
<dbReference type="ExpressionAtlas" id="Q8VD66">
    <property type="expression patterns" value="baseline and differential"/>
</dbReference>
<dbReference type="GO" id="GO:0004622">
    <property type="term" value="F:lysophospholipase activity"/>
    <property type="evidence" value="ECO:0000314"/>
    <property type="project" value="MGI"/>
</dbReference>
<dbReference type="GO" id="GO:0016042">
    <property type="term" value="P:lipid catabolic process"/>
    <property type="evidence" value="ECO:0007669"/>
    <property type="project" value="UniProtKB-KW"/>
</dbReference>
<dbReference type="GO" id="GO:0070291">
    <property type="term" value="P:N-acylethanolamine metabolic process"/>
    <property type="evidence" value="ECO:0000314"/>
    <property type="project" value="MGI"/>
</dbReference>
<dbReference type="GO" id="GO:0070292">
    <property type="term" value="P:N-acylphosphatidylethanolamine metabolic process"/>
    <property type="evidence" value="ECO:0000315"/>
    <property type="project" value="UniProtKB"/>
</dbReference>
<dbReference type="FunFam" id="3.40.50.1820:FF:000044">
    <property type="entry name" value="Abhydrolase domain containing 4"/>
    <property type="match status" value="1"/>
</dbReference>
<dbReference type="Gene3D" id="3.40.50.1820">
    <property type="entry name" value="alpha/beta hydrolase"/>
    <property type="match status" value="1"/>
</dbReference>
<dbReference type="InterPro" id="IPR000073">
    <property type="entry name" value="AB_hydrolase_1"/>
</dbReference>
<dbReference type="InterPro" id="IPR029058">
    <property type="entry name" value="AB_hydrolase_fold"/>
</dbReference>
<dbReference type="PANTHER" id="PTHR42886:SF21">
    <property type="entry name" value="(LYSO)-N-ACYLPHOSPHATIDYLETHANOLAMINE LIPASE"/>
    <property type="match status" value="1"/>
</dbReference>
<dbReference type="PANTHER" id="PTHR42886">
    <property type="entry name" value="RE40534P-RELATED"/>
    <property type="match status" value="1"/>
</dbReference>
<dbReference type="Pfam" id="PF00561">
    <property type="entry name" value="Abhydrolase_1"/>
    <property type="match status" value="1"/>
</dbReference>
<dbReference type="PRINTS" id="PR00111">
    <property type="entry name" value="ABHYDROLASE"/>
</dbReference>
<dbReference type="SUPFAM" id="SSF53474">
    <property type="entry name" value="alpha/beta-Hydrolases"/>
    <property type="match status" value="1"/>
</dbReference>
<evidence type="ECO:0000255" key="1"/>
<evidence type="ECO:0000269" key="2">
    <source>
    </source>
</evidence>
<evidence type="ECO:0000269" key="3">
    <source>
    </source>
</evidence>
<evidence type="ECO:0000305" key="4"/>
<evidence type="ECO:0000305" key="5">
    <source>
    </source>
</evidence>
<evidence type="ECO:0000312" key="6">
    <source>
        <dbReference type="MGI" id="MGI:1915938"/>
    </source>
</evidence>
<reference key="1">
    <citation type="journal article" date="2005" name="Science">
        <title>The transcriptional landscape of the mammalian genome.</title>
        <authorList>
            <person name="Carninci P."/>
            <person name="Kasukawa T."/>
            <person name="Katayama S."/>
            <person name="Gough J."/>
            <person name="Frith M.C."/>
            <person name="Maeda N."/>
            <person name="Oyama R."/>
            <person name="Ravasi T."/>
            <person name="Lenhard B."/>
            <person name="Wells C."/>
            <person name="Kodzius R."/>
            <person name="Shimokawa K."/>
            <person name="Bajic V.B."/>
            <person name="Brenner S.E."/>
            <person name="Batalov S."/>
            <person name="Forrest A.R."/>
            <person name="Zavolan M."/>
            <person name="Davis M.J."/>
            <person name="Wilming L.G."/>
            <person name="Aidinis V."/>
            <person name="Allen J.E."/>
            <person name="Ambesi-Impiombato A."/>
            <person name="Apweiler R."/>
            <person name="Aturaliya R.N."/>
            <person name="Bailey T.L."/>
            <person name="Bansal M."/>
            <person name="Baxter L."/>
            <person name="Beisel K.W."/>
            <person name="Bersano T."/>
            <person name="Bono H."/>
            <person name="Chalk A.M."/>
            <person name="Chiu K.P."/>
            <person name="Choudhary V."/>
            <person name="Christoffels A."/>
            <person name="Clutterbuck D.R."/>
            <person name="Crowe M.L."/>
            <person name="Dalla E."/>
            <person name="Dalrymple B.P."/>
            <person name="de Bono B."/>
            <person name="Della Gatta G."/>
            <person name="di Bernardo D."/>
            <person name="Down T."/>
            <person name="Engstrom P."/>
            <person name="Fagiolini M."/>
            <person name="Faulkner G."/>
            <person name="Fletcher C.F."/>
            <person name="Fukushima T."/>
            <person name="Furuno M."/>
            <person name="Futaki S."/>
            <person name="Gariboldi M."/>
            <person name="Georgii-Hemming P."/>
            <person name="Gingeras T.R."/>
            <person name="Gojobori T."/>
            <person name="Green R.E."/>
            <person name="Gustincich S."/>
            <person name="Harbers M."/>
            <person name="Hayashi Y."/>
            <person name="Hensch T.K."/>
            <person name="Hirokawa N."/>
            <person name="Hill D."/>
            <person name="Huminiecki L."/>
            <person name="Iacono M."/>
            <person name="Ikeo K."/>
            <person name="Iwama A."/>
            <person name="Ishikawa T."/>
            <person name="Jakt M."/>
            <person name="Kanapin A."/>
            <person name="Katoh M."/>
            <person name="Kawasawa Y."/>
            <person name="Kelso J."/>
            <person name="Kitamura H."/>
            <person name="Kitano H."/>
            <person name="Kollias G."/>
            <person name="Krishnan S.P."/>
            <person name="Kruger A."/>
            <person name="Kummerfeld S.K."/>
            <person name="Kurochkin I.V."/>
            <person name="Lareau L.F."/>
            <person name="Lazarevic D."/>
            <person name="Lipovich L."/>
            <person name="Liu J."/>
            <person name="Liuni S."/>
            <person name="McWilliam S."/>
            <person name="Madan Babu M."/>
            <person name="Madera M."/>
            <person name="Marchionni L."/>
            <person name="Matsuda H."/>
            <person name="Matsuzawa S."/>
            <person name="Miki H."/>
            <person name="Mignone F."/>
            <person name="Miyake S."/>
            <person name="Morris K."/>
            <person name="Mottagui-Tabar S."/>
            <person name="Mulder N."/>
            <person name="Nakano N."/>
            <person name="Nakauchi H."/>
            <person name="Ng P."/>
            <person name="Nilsson R."/>
            <person name="Nishiguchi S."/>
            <person name="Nishikawa S."/>
            <person name="Nori F."/>
            <person name="Ohara O."/>
            <person name="Okazaki Y."/>
            <person name="Orlando V."/>
            <person name="Pang K.C."/>
            <person name="Pavan W.J."/>
            <person name="Pavesi G."/>
            <person name="Pesole G."/>
            <person name="Petrovsky N."/>
            <person name="Piazza S."/>
            <person name="Reed J."/>
            <person name="Reid J.F."/>
            <person name="Ring B.Z."/>
            <person name="Ringwald M."/>
            <person name="Rost B."/>
            <person name="Ruan Y."/>
            <person name="Salzberg S.L."/>
            <person name="Sandelin A."/>
            <person name="Schneider C."/>
            <person name="Schoenbach C."/>
            <person name="Sekiguchi K."/>
            <person name="Semple C.A."/>
            <person name="Seno S."/>
            <person name="Sessa L."/>
            <person name="Sheng Y."/>
            <person name="Shibata Y."/>
            <person name="Shimada H."/>
            <person name="Shimada K."/>
            <person name="Silva D."/>
            <person name="Sinclair B."/>
            <person name="Sperling S."/>
            <person name="Stupka E."/>
            <person name="Sugiura K."/>
            <person name="Sultana R."/>
            <person name="Takenaka Y."/>
            <person name="Taki K."/>
            <person name="Tammoja K."/>
            <person name="Tan S.L."/>
            <person name="Tang S."/>
            <person name="Taylor M.S."/>
            <person name="Tegner J."/>
            <person name="Teichmann S.A."/>
            <person name="Ueda H.R."/>
            <person name="van Nimwegen E."/>
            <person name="Verardo R."/>
            <person name="Wei C.L."/>
            <person name="Yagi K."/>
            <person name="Yamanishi H."/>
            <person name="Zabarovsky E."/>
            <person name="Zhu S."/>
            <person name="Zimmer A."/>
            <person name="Hide W."/>
            <person name="Bult C."/>
            <person name="Grimmond S.M."/>
            <person name="Teasdale R.D."/>
            <person name="Liu E.T."/>
            <person name="Brusic V."/>
            <person name="Quackenbush J."/>
            <person name="Wahlestedt C."/>
            <person name="Mattick J.S."/>
            <person name="Hume D.A."/>
            <person name="Kai C."/>
            <person name="Sasaki D."/>
            <person name="Tomaru Y."/>
            <person name="Fukuda S."/>
            <person name="Kanamori-Katayama M."/>
            <person name="Suzuki M."/>
            <person name="Aoki J."/>
            <person name="Arakawa T."/>
            <person name="Iida J."/>
            <person name="Imamura K."/>
            <person name="Itoh M."/>
            <person name="Kato T."/>
            <person name="Kawaji H."/>
            <person name="Kawagashira N."/>
            <person name="Kawashima T."/>
            <person name="Kojima M."/>
            <person name="Kondo S."/>
            <person name="Konno H."/>
            <person name="Nakano K."/>
            <person name="Ninomiya N."/>
            <person name="Nishio T."/>
            <person name="Okada M."/>
            <person name="Plessy C."/>
            <person name="Shibata K."/>
            <person name="Shiraki T."/>
            <person name="Suzuki S."/>
            <person name="Tagami M."/>
            <person name="Waki K."/>
            <person name="Watahiki A."/>
            <person name="Okamura-Oho Y."/>
            <person name="Suzuki H."/>
            <person name="Kawai J."/>
            <person name="Hayashizaki Y."/>
        </authorList>
    </citation>
    <scope>NUCLEOTIDE SEQUENCE [LARGE SCALE MRNA]</scope>
    <source>
        <strain>C57BL/6J</strain>
    </source>
</reference>
<reference key="2">
    <citation type="journal article" date="2004" name="Genome Res.">
        <title>The status, quality, and expansion of the NIH full-length cDNA project: the Mammalian Gene Collection (MGC).</title>
        <authorList>
            <consortium name="The MGC Project Team"/>
        </authorList>
    </citation>
    <scope>NUCLEOTIDE SEQUENCE [LARGE SCALE MRNA]</scope>
    <source>
        <tissue>Eye</tissue>
    </source>
</reference>
<reference key="3">
    <citation type="journal article" date="2006" name="J. Biol. Chem.">
        <title>Endocannabinoid biosynthesis proceeding through glycerophospho-N-acyl ethanolamine and a role for alpha/beta hydrolase 4 in this pathway.</title>
        <authorList>
            <person name="Simon G.M."/>
            <person name="Cravatt B.F."/>
        </authorList>
    </citation>
    <scope>FUNCTION</scope>
    <scope>TISSUE SPECIFICITY</scope>
    <scope>CATALYTIC ACTIVITY</scope>
</reference>
<reference key="4">
    <citation type="journal article" date="2010" name="Cell">
        <title>A tissue-specific atlas of mouse protein phosphorylation and expression.</title>
        <authorList>
            <person name="Huttlin E.L."/>
            <person name="Jedrychowski M.P."/>
            <person name="Elias J.E."/>
            <person name="Goswami T."/>
            <person name="Rad R."/>
            <person name="Beausoleil S.A."/>
            <person name="Villen J."/>
            <person name="Haas W."/>
            <person name="Sowa M.E."/>
            <person name="Gygi S.P."/>
        </authorList>
    </citation>
    <scope>IDENTIFICATION BY MASS SPECTROMETRY [LARGE SCALE ANALYSIS]</scope>
    <source>
        <tissue>Brain</tissue>
        <tissue>Lung</tissue>
        <tissue>Testis</tissue>
    </source>
</reference>
<reference key="5">
    <citation type="journal article" date="2015" name="Biochemistry">
        <title>ABHD4 regulates multiple classes of N-acyl phospholipids in the mammalian central nervous system.</title>
        <authorList>
            <person name="Lee H.C."/>
            <person name="Simon G.M."/>
            <person name="Cravatt B.F."/>
        </authorList>
    </citation>
    <scope>DISRUPTION PHENOTYPE</scope>
    <scope>FUNCTION</scope>
    <scope>CATALYTIC ACTIVITY</scope>
</reference>
<feature type="chain" id="PRO_0000080865" description="(Lyso)-N-acylphosphatidylethanolamine lipase">
    <location>
        <begin position="1"/>
        <end position="342"/>
    </location>
</feature>
<feature type="domain" description="AB hydrolase-1" evidence="1">
    <location>
        <begin position="70"/>
        <end position="323"/>
    </location>
</feature>
<keyword id="KW-0378">Hydrolase</keyword>
<keyword id="KW-0442">Lipid degradation</keyword>
<keyword id="KW-0443">Lipid metabolism</keyword>
<keyword id="KW-1185">Reference proteome</keyword>
<name>ABHD4_MOUSE</name>
<comment type="function">
    <text evidence="2 3">Lysophospholipase selective for N-acyl phosphatidylethanolamine (NAPE). Contributes to the biosynthesis of N-acyl ethanolamines, including the endocannabinoid anandamide by hydrolyzing the sn-1 and sn-2 acyl chains from N-acyl phosphatidylethanolamine (NAPE) generating glycerophospho-N-acyl ethanolamine (GP-NAE), an intermediate for N-acyl ethanolamine biosynthesis (PubMed:16818490, PubMed:25853435). Hydrolyzes substrates bearing saturated, monounsaturated, polyunsaturated N-acyl chains (PubMed:16818490, PubMed:25853435). Shows no significant activity towards other lysophospholipids, including lysophosphatidylcholine, lysophosphatidylethanolamine and lysophosphatidylserine (PubMed:16818490).</text>
</comment>
<comment type="catalytic activity">
    <reaction evidence="2">
        <text>N-hexadecanoyl-1,2-di-(9Z-octadecenoyl)-sn-glycero-3-phosphoethanolamine + H2O = N-hexadecanoyl-1-(9Z-octadecenoyl)-sn-glycero-3-phosphoethanolamine + (9Z)-octadecenoate + H(+)</text>
        <dbReference type="Rhea" id="RHEA:45424"/>
        <dbReference type="ChEBI" id="CHEBI:15377"/>
        <dbReference type="ChEBI" id="CHEBI:15378"/>
        <dbReference type="ChEBI" id="CHEBI:30823"/>
        <dbReference type="ChEBI" id="CHEBI:78097"/>
        <dbReference type="ChEBI" id="CHEBI:85217"/>
    </reaction>
    <physiologicalReaction direction="left-to-right" evidence="5">
        <dbReference type="Rhea" id="RHEA:45425"/>
    </physiologicalReaction>
</comment>
<comment type="catalytic activity">
    <reaction evidence="2">
        <text>an N-acyl-1,2-diacyl-sn-glycero-3-phosphoethanolamine + H2O = N,1-diacyl-sn-glycero-3-phosphoethanolamine + a fatty acid + H(+)</text>
        <dbReference type="Rhea" id="RHEA:45460"/>
        <dbReference type="ChEBI" id="CHEBI:15377"/>
        <dbReference type="ChEBI" id="CHEBI:15378"/>
        <dbReference type="ChEBI" id="CHEBI:28868"/>
        <dbReference type="ChEBI" id="CHEBI:62537"/>
        <dbReference type="ChEBI" id="CHEBI:85216"/>
    </reaction>
    <physiologicalReaction direction="left-to-right" evidence="5">
        <dbReference type="Rhea" id="RHEA:45461"/>
    </physiologicalReaction>
</comment>
<comment type="catalytic activity">
    <reaction evidence="2 3">
        <text>N-hexadecanoyl-1-(9Z-octadecenoyl)-sn-glycero-3-phosphoethanolamine + H2O = N-hexadecanoyl-sn-glycero-3-phosphoethanolamine + (9Z)-octadecenoate + H(+)</text>
        <dbReference type="Rhea" id="RHEA:45384"/>
        <dbReference type="ChEBI" id="CHEBI:15377"/>
        <dbReference type="ChEBI" id="CHEBI:15378"/>
        <dbReference type="ChEBI" id="CHEBI:30823"/>
        <dbReference type="ChEBI" id="CHEBI:85217"/>
        <dbReference type="ChEBI" id="CHEBI:85226"/>
    </reaction>
    <physiologicalReaction direction="left-to-right" evidence="3">
        <dbReference type="Rhea" id="RHEA:45385"/>
    </physiologicalReaction>
</comment>
<comment type="catalytic activity">
    <reaction evidence="2">
        <text>N-octadecanoyl-1-(9Z-octadecenoyl)-sn-glycero-3-phosphoethanolamine + H2O = N-octadecanoyl-sn-glycero-3-phospho-ethanolamine + (9Z)-octadecenoate + H(+)</text>
        <dbReference type="Rhea" id="RHEA:45388"/>
        <dbReference type="ChEBI" id="CHEBI:15377"/>
        <dbReference type="ChEBI" id="CHEBI:15378"/>
        <dbReference type="ChEBI" id="CHEBI:30823"/>
        <dbReference type="ChEBI" id="CHEBI:85219"/>
        <dbReference type="ChEBI" id="CHEBI:85227"/>
    </reaction>
    <physiologicalReaction direction="left-to-right" evidence="5">
        <dbReference type="Rhea" id="RHEA:45389"/>
    </physiologicalReaction>
</comment>
<comment type="catalytic activity">
    <reaction evidence="2">
        <text>N-eicosanoyl-1-(9Z-octadecenoyl)-sn-glycero-3-phosphoethanolamine + H2O = N-eicosanoyl-sn-glycero-3-phosphoethanolamine + (9Z)-octadecenoate + H(+)</text>
        <dbReference type="Rhea" id="RHEA:45392"/>
        <dbReference type="ChEBI" id="CHEBI:15377"/>
        <dbReference type="ChEBI" id="CHEBI:15378"/>
        <dbReference type="ChEBI" id="CHEBI:30823"/>
        <dbReference type="ChEBI" id="CHEBI:85221"/>
        <dbReference type="ChEBI" id="CHEBI:85228"/>
    </reaction>
    <physiologicalReaction direction="left-to-right" evidence="5">
        <dbReference type="Rhea" id="RHEA:45393"/>
    </physiologicalReaction>
</comment>
<comment type="catalytic activity">
    <reaction evidence="2">
        <text>N,1-di-(9Z-octadecenoyl)-sn-glycero-3-phosphoethanolamine + H2O = N-(9Z-octadecenoyl)-sn-glycero-3-phosphoethanolamine + (9Z)-octadecenoate + H(+)</text>
        <dbReference type="Rhea" id="RHEA:45396"/>
        <dbReference type="ChEBI" id="CHEBI:15377"/>
        <dbReference type="ChEBI" id="CHEBI:15378"/>
        <dbReference type="ChEBI" id="CHEBI:30823"/>
        <dbReference type="ChEBI" id="CHEBI:85222"/>
        <dbReference type="ChEBI" id="CHEBI:85229"/>
    </reaction>
    <physiologicalReaction direction="left-to-right" evidence="5">
        <dbReference type="Rhea" id="RHEA:45397"/>
    </physiologicalReaction>
</comment>
<comment type="catalytic activity">
    <reaction evidence="2">
        <text>N-(5Z,8Z,11Z,14Z-eicosatetraenoyl)-1-(9Z-octadecenoyl)-sn-glycero-3-phosphoethanolamine + H2O = N-(5Z,8Z,11Z,14Z-eicosatetraenoyl)-sn-glycero-3-phosphoethanolamine + (9Z)-octadecenoate + H(+)</text>
        <dbReference type="Rhea" id="RHEA:45400"/>
        <dbReference type="ChEBI" id="CHEBI:15377"/>
        <dbReference type="ChEBI" id="CHEBI:15378"/>
        <dbReference type="ChEBI" id="CHEBI:30823"/>
        <dbReference type="ChEBI" id="CHEBI:85223"/>
        <dbReference type="ChEBI" id="CHEBI:85230"/>
    </reaction>
    <physiologicalReaction direction="left-to-right" evidence="5">
        <dbReference type="Rhea" id="RHEA:45401"/>
    </physiologicalReaction>
</comment>
<comment type="catalytic activity">
    <reaction evidence="3">
        <text>1-octadecanoyl-2-(9Z-octadecenoyl)-sn-glycero-3-phospho-(N-hexadecanoyl)-serine + H2O = 1-octadecanoyl-2-hydroxy-sn-glycero-3-phospho-(N-hexadecanoyl)-serine + (9Z)-octadecenoate + H(+)</text>
        <dbReference type="Rhea" id="RHEA:55236"/>
        <dbReference type="ChEBI" id="CHEBI:15377"/>
        <dbReference type="ChEBI" id="CHEBI:15378"/>
        <dbReference type="ChEBI" id="CHEBI:30823"/>
        <dbReference type="ChEBI" id="CHEBI:138661"/>
        <dbReference type="ChEBI" id="CHEBI:138662"/>
    </reaction>
    <physiologicalReaction direction="left-to-right" evidence="3">
        <dbReference type="Rhea" id="RHEA:55237"/>
    </physiologicalReaction>
</comment>
<comment type="catalytic activity">
    <reaction evidence="3">
        <text>1-O-(1Z-octadecenoyl)-2-(9Z-octadecenoyl)-sn-glycero-3-phospho-N-hexadecanoyl-ethanolamine + H2O = 1-O-(1Z-octadecenyl)-sn-glycero-3-phospho-N-hexadecanoyl-ethanolamine + (9Z)-octadecenoate + H(+)</text>
        <dbReference type="Rhea" id="RHEA:55240"/>
        <dbReference type="ChEBI" id="CHEBI:15377"/>
        <dbReference type="ChEBI" id="CHEBI:15378"/>
        <dbReference type="ChEBI" id="CHEBI:30823"/>
        <dbReference type="ChEBI" id="CHEBI:137009"/>
        <dbReference type="ChEBI" id="CHEBI:138663"/>
    </reaction>
    <physiologicalReaction direction="left-to-right" evidence="3">
        <dbReference type="Rhea" id="RHEA:55241"/>
    </physiologicalReaction>
</comment>
<comment type="catalytic activity">
    <reaction evidence="2">
        <text>N,1-diacyl-sn-glycero-3-phosphoethanolamine + H2O = N-acyl-sn-glycero-3-phosphoethanolamine + a fatty acid + H(+)</text>
        <dbReference type="Rhea" id="RHEA:45420"/>
        <dbReference type="ChEBI" id="CHEBI:15377"/>
        <dbReference type="ChEBI" id="CHEBI:15378"/>
        <dbReference type="ChEBI" id="CHEBI:28868"/>
        <dbReference type="ChEBI" id="CHEBI:85216"/>
        <dbReference type="ChEBI" id="CHEBI:85225"/>
    </reaction>
    <physiologicalReaction direction="left-to-right" evidence="5">
        <dbReference type="Rhea" id="RHEA:45421"/>
    </physiologicalReaction>
</comment>
<comment type="tissue specificity">
    <text evidence="2">Highest levels in the CNS and in testis, intermediate levels in liver and kidney. Hardly detectable in heart.</text>
</comment>
<comment type="disruption phenotype">
    <text evidence="3">Homozygous knockout ABHD4 mice are born at the expected Mendelian frequency, are viable and healthy, and show no overt differences in their cage behavior compared to that of wild-type littermates.</text>
</comment>
<comment type="similarity">
    <text evidence="4">Belongs to the peptidase S33 family. ABHD4/ABHD5 subfamily.</text>
</comment>
<comment type="caution">
    <text evidence="4">Thr-291 is present instead of the conserved His which is expected to be an active site residue.</text>
</comment>
<proteinExistence type="evidence at protein level"/>
<accession>Q8VD66</accession>
<protein>
    <recommendedName>
        <fullName evidence="4">(Lyso)-N-acylphosphatidylethanolamine lipase</fullName>
        <ecNumber>3.1.1.-</ecNumber>
    </recommendedName>
    <alternativeName>
        <fullName evidence="4">Alpha/beta hydrolase domain-containing protein 4</fullName>
        <shortName evidence="6">Abhydrolase domain-containing protein 4</shortName>
    </alternativeName>
    <alternativeName>
        <fullName>Alpha/beta-hydrolase 4</fullName>
    </alternativeName>
</protein>